<name>RS20_CYTH3</name>
<sequence>MANHKSALKRIRANRAKYLRNRYQMKTTRTFVKRLRASTVKADANELYKKVSGMLDKLAKRNIIHKNNAANKKSKLAKFVNKLAA</sequence>
<accession>Q11TZ6</accession>
<evidence type="ECO:0000255" key="1">
    <source>
        <dbReference type="HAMAP-Rule" id="MF_00500"/>
    </source>
</evidence>
<evidence type="ECO:0000305" key="2"/>
<feature type="chain" id="PRO_0000260114" description="Small ribosomal subunit protein bS20">
    <location>
        <begin position="1"/>
        <end position="85"/>
    </location>
</feature>
<keyword id="KW-1185">Reference proteome</keyword>
<keyword id="KW-0687">Ribonucleoprotein</keyword>
<keyword id="KW-0689">Ribosomal protein</keyword>
<keyword id="KW-0694">RNA-binding</keyword>
<keyword id="KW-0699">rRNA-binding</keyword>
<proteinExistence type="inferred from homology"/>
<protein>
    <recommendedName>
        <fullName evidence="1">Small ribosomal subunit protein bS20</fullName>
    </recommendedName>
    <alternativeName>
        <fullName evidence="2">30S ribosomal protein S20</fullName>
    </alternativeName>
</protein>
<comment type="function">
    <text evidence="1">Binds directly to 16S ribosomal RNA.</text>
</comment>
<comment type="similarity">
    <text evidence="1">Belongs to the bacterial ribosomal protein bS20 family.</text>
</comment>
<reference key="1">
    <citation type="journal article" date="2007" name="Appl. Environ. Microbiol.">
        <title>Genome sequence of the cellulolytic gliding bacterium Cytophaga hutchinsonii.</title>
        <authorList>
            <person name="Xie G."/>
            <person name="Bruce D.C."/>
            <person name="Challacombe J.F."/>
            <person name="Chertkov O."/>
            <person name="Detter J.C."/>
            <person name="Gilna P."/>
            <person name="Han C.S."/>
            <person name="Lucas S."/>
            <person name="Misra M."/>
            <person name="Myers G.L."/>
            <person name="Richardson P."/>
            <person name="Tapia R."/>
            <person name="Thayer N."/>
            <person name="Thompson L.S."/>
            <person name="Brettin T.S."/>
            <person name="Henrissat B."/>
            <person name="Wilson D.B."/>
            <person name="McBride M.J."/>
        </authorList>
    </citation>
    <scope>NUCLEOTIDE SEQUENCE [LARGE SCALE GENOMIC DNA]</scope>
    <source>
        <strain>ATCC 33406 / DSM 1761 / JCM 20678 / CIP 103989 / IAM 12607 / NBRC 15051 / NCIMB 9469 / D465</strain>
    </source>
</reference>
<gene>
    <name evidence="1" type="primary">rpsT</name>
    <name type="ordered locus">CHU_1851</name>
</gene>
<organism>
    <name type="scientific">Cytophaga hutchinsonii (strain ATCC 33406 / DSM 1761 / CIP 103989 / NBRC 15051 / NCIMB 9469 / D465)</name>
    <dbReference type="NCBI Taxonomy" id="269798"/>
    <lineage>
        <taxon>Bacteria</taxon>
        <taxon>Pseudomonadati</taxon>
        <taxon>Bacteroidota</taxon>
        <taxon>Cytophagia</taxon>
        <taxon>Cytophagales</taxon>
        <taxon>Cytophagaceae</taxon>
        <taxon>Cytophaga</taxon>
    </lineage>
</organism>
<dbReference type="EMBL" id="CP000383">
    <property type="protein sequence ID" value="ABG59118.1"/>
    <property type="molecule type" value="Genomic_DNA"/>
</dbReference>
<dbReference type="RefSeq" id="WP_011585235.1">
    <property type="nucleotide sequence ID" value="NC_008255.1"/>
</dbReference>
<dbReference type="SMR" id="Q11TZ6"/>
<dbReference type="STRING" id="269798.CHU_1851"/>
<dbReference type="KEGG" id="chu:CHU_1851"/>
<dbReference type="eggNOG" id="COG0268">
    <property type="taxonomic scope" value="Bacteria"/>
</dbReference>
<dbReference type="HOGENOM" id="CLU_160655_3_2_10"/>
<dbReference type="OrthoDB" id="9808392at2"/>
<dbReference type="Proteomes" id="UP000001822">
    <property type="component" value="Chromosome"/>
</dbReference>
<dbReference type="GO" id="GO:0005829">
    <property type="term" value="C:cytosol"/>
    <property type="evidence" value="ECO:0007669"/>
    <property type="project" value="TreeGrafter"/>
</dbReference>
<dbReference type="GO" id="GO:0015935">
    <property type="term" value="C:small ribosomal subunit"/>
    <property type="evidence" value="ECO:0007669"/>
    <property type="project" value="TreeGrafter"/>
</dbReference>
<dbReference type="GO" id="GO:0070181">
    <property type="term" value="F:small ribosomal subunit rRNA binding"/>
    <property type="evidence" value="ECO:0007669"/>
    <property type="project" value="TreeGrafter"/>
</dbReference>
<dbReference type="GO" id="GO:0003735">
    <property type="term" value="F:structural constituent of ribosome"/>
    <property type="evidence" value="ECO:0007669"/>
    <property type="project" value="InterPro"/>
</dbReference>
<dbReference type="GO" id="GO:0006412">
    <property type="term" value="P:translation"/>
    <property type="evidence" value="ECO:0007669"/>
    <property type="project" value="UniProtKB-UniRule"/>
</dbReference>
<dbReference type="Gene3D" id="1.20.58.110">
    <property type="entry name" value="Ribosomal protein S20"/>
    <property type="match status" value="1"/>
</dbReference>
<dbReference type="HAMAP" id="MF_00500">
    <property type="entry name" value="Ribosomal_bS20"/>
    <property type="match status" value="1"/>
</dbReference>
<dbReference type="InterPro" id="IPR002583">
    <property type="entry name" value="Ribosomal_bS20"/>
</dbReference>
<dbReference type="InterPro" id="IPR036510">
    <property type="entry name" value="Ribosomal_bS20_sf"/>
</dbReference>
<dbReference type="NCBIfam" id="TIGR00029">
    <property type="entry name" value="S20"/>
    <property type="match status" value="1"/>
</dbReference>
<dbReference type="PANTHER" id="PTHR33398">
    <property type="entry name" value="30S RIBOSOMAL PROTEIN S20"/>
    <property type="match status" value="1"/>
</dbReference>
<dbReference type="PANTHER" id="PTHR33398:SF1">
    <property type="entry name" value="SMALL RIBOSOMAL SUBUNIT PROTEIN BS20C"/>
    <property type="match status" value="1"/>
</dbReference>
<dbReference type="Pfam" id="PF01649">
    <property type="entry name" value="Ribosomal_S20p"/>
    <property type="match status" value="1"/>
</dbReference>
<dbReference type="SUPFAM" id="SSF46992">
    <property type="entry name" value="Ribosomal protein S20"/>
    <property type="match status" value="1"/>
</dbReference>